<organism>
    <name type="scientific">Listeria innocua serovar 6a (strain ATCC BAA-680 / CLIP 11262)</name>
    <dbReference type="NCBI Taxonomy" id="272626"/>
    <lineage>
        <taxon>Bacteria</taxon>
        <taxon>Bacillati</taxon>
        <taxon>Bacillota</taxon>
        <taxon>Bacilli</taxon>
        <taxon>Bacillales</taxon>
        <taxon>Listeriaceae</taxon>
        <taxon>Listeria</taxon>
    </lineage>
</organism>
<reference key="1">
    <citation type="journal article" date="2001" name="Science">
        <title>Comparative genomics of Listeria species.</title>
        <authorList>
            <person name="Glaser P."/>
            <person name="Frangeul L."/>
            <person name="Buchrieser C."/>
            <person name="Rusniok C."/>
            <person name="Amend A."/>
            <person name="Baquero F."/>
            <person name="Berche P."/>
            <person name="Bloecker H."/>
            <person name="Brandt P."/>
            <person name="Chakraborty T."/>
            <person name="Charbit A."/>
            <person name="Chetouani F."/>
            <person name="Couve E."/>
            <person name="de Daruvar A."/>
            <person name="Dehoux P."/>
            <person name="Domann E."/>
            <person name="Dominguez-Bernal G."/>
            <person name="Duchaud E."/>
            <person name="Durant L."/>
            <person name="Dussurget O."/>
            <person name="Entian K.-D."/>
            <person name="Fsihi H."/>
            <person name="Garcia-del Portillo F."/>
            <person name="Garrido P."/>
            <person name="Gautier L."/>
            <person name="Goebel W."/>
            <person name="Gomez-Lopez N."/>
            <person name="Hain T."/>
            <person name="Hauf J."/>
            <person name="Jackson D."/>
            <person name="Jones L.-M."/>
            <person name="Kaerst U."/>
            <person name="Kreft J."/>
            <person name="Kuhn M."/>
            <person name="Kunst F."/>
            <person name="Kurapkat G."/>
            <person name="Madueno E."/>
            <person name="Maitournam A."/>
            <person name="Mata Vicente J."/>
            <person name="Ng E."/>
            <person name="Nedjari H."/>
            <person name="Nordsiek G."/>
            <person name="Novella S."/>
            <person name="de Pablos B."/>
            <person name="Perez-Diaz J.-C."/>
            <person name="Purcell R."/>
            <person name="Remmel B."/>
            <person name="Rose M."/>
            <person name="Schlueter T."/>
            <person name="Simoes N."/>
            <person name="Tierrez A."/>
            <person name="Vazquez-Boland J.-A."/>
            <person name="Voss H."/>
            <person name="Wehland J."/>
            <person name="Cossart P."/>
        </authorList>
    </citation>
    <scope>NUCLEOTIDE SEQUENCE [LARGE SCALE GENOMIC DNA]</scope>
    <source>
        <strain>ATCC BAA-680 / CLIP 11262</strain>
    </source>
</reference>
<protein>
    <recommendedName>
        <fullName evidence="1">UDP-N-acetylenolpyruvoylglucosamine reductase</fullName>
        <ecNumber evidence="1">1.3.1.98</ecNumber>
    </recommendedName>
    <alternativeName>
        <fullName evidence="1">UDP-N-acetylmuramate dehydrogenase</fullName>
    </alternativeName>
</protein>
<dbReference type="EC" id="1.3.1.98" evidence="1"/>
<dbReference type="EMBL" id="AL596168">
    <property type="protein sequence ID" value="CAC96690.1"/>
    <property type="molecule type" value="Genomic_DNA"/>
</dbReference>
<dbReference type="PIR" id="AB1615">
    <property type="entry name" value="AB1615"/>
</dbReference>
<dbReference type="RefSeq" id="WP_003771810.1">
    <property type="nucleotide sequence ID" value="NC_003212.1"/>
</dbReference>
<dbReference type="SMR" id="Q92BT5"/>
<dbReference type="STRING" id="272626.gene:17565790"/>
<dbReference type="GeneID" id="93234840"/>
<dbReference type="KEGG" id="lin:lin1459"/>
<dbReference type="eggNOG" id="COG0812">
    <property type="taxonomic scope" value="Bacteria"/>
</dbReference>
<dbReference type="HOGENOM" id="CLU_035304_1_1_9"/>
<dbReference type="OrthoDB" id="9804753at2"/>
<dbReference type="UniPathway" id="UPA00219"/>
<dbReference type="Proteomes" id="UP000002513">
    <property type="component" value="Chromosome"/>
</dbReference>
<dbReference type="GO" id="GO:0005829">
    <property type="term" value="C:cytosol"/>
    <property type="evidence" value="ECO:0007669"/>
    <property type="project" value="TreeGrafter"/>
</dbReference>
<dbReference type="GO" id="GO:0071949">
    <property type="term" value="F:FAD binding"/>
    <property type="evidence" value="ECO:0007669"/>
    <property type="project" value="InterPro"/>
</dbReference>
<dbReference type="GO" id="GO:0008762">
    <property type="term" value="F:UDP-N-acetylmuramate dehydrogenase activity"/>
    <property type="evidence" value="ECO:0007669"/>
    <property type="project" value="UniProtKB-UniRule"/>
</dbReference>
<dbReference type="GO" id="GO:0051301">
    <property type="term" value="P:cell division"/>
    <property type="evidence" value="ECO:0007669"/>
    <property type="project" value="UniProtKB-KW"/>
</dbReference>
<dbReference type="GO" id="GO:0071555">
    <property type="term" value="P:cell wall organization"/>
    <property type="evidence" value="ECO:0007669"/>
    <property type="project" value="UniProtKB-KW"/>
</dbReference>
<dbReference type="GO" id="GO:0009252">
    <property type="term" value="P:peptidoglycan biosynthetic process"/>
    <property type="evidence" value="ECO:0007669"/>
    <property type="project" value="UniProtKB-UniRule"/>
</dbReference>
<dbReference type="GO" id="GO:0008360">
    <property type="term" value="P:regulation of cell shape"/>
    <property type="evidence" value="ECO:0007669"/>
    <property type="project" value="UniProtKB-KW"/>
</dbReference>
<dbReference type="FunFam" id="3.90.78.10:FF:000001">
    <property type="entry name" value="UDP-N-acetylenolpyruvoylglucosamine reductase"/>
    <property type="match status" value="1"/>
</dbReference>
<dbReference type="Gene3D" id="3.30.465.10">
    <property type="match status" value="1"/>
</dbReference>
<dbReference type="Gene3D" id="3.90.78.10">
    <property type="entry name" value="UDP-N-acetylenolpyruvoylglucosamine reductase, C-terminal domain"/>
    <property type="match status" value="1"/>
</dbReference>
<dbReference type="Gene3D" id="3.30.43.10">
    <property type="entry name" value="Uridine Diphospho-n-acetylenolpyruvylglucosamine Reductase, domain 2"/>
    <property type="match status" value="1"/>
</dbReference>
<dbReference type="HAMAP" id="MF_00037">
    <property type="entry name" value="MurB"/>
    <property type="match status" value="1"/>
</dbReference>
<dbReference type="InterPro" id="IPR016166">
    <property type="entry name" value="FAD-bd_PCMH"/>
</dbReference>
<dbReference type="InterPro" id="IPR036318">
    <property type="entry name" value="FAD-bd_PCMH-like_sf"/>
</dbReference>
<dbReference type="InterPro" id="IPR016167">
    <property type="entry name" value="FAD-bd_PCMH_sub1"/>
</dbReference>
<dbReference type="InterPro" id="IPR016169">
    <property type="entry name" value="FAD-bd_PCMH_sub2"/>
</dbReference>
<dbReference type="InterPro" id="IPR003170">
    <property type="entry name" value="MurB"/>
</dbReference>
<dbReference type="InterPro" id="IPR011601">
    <property type="entry name" value="MurB_C"/>
</dbReference>
<dbReference type="InterPro" id="IPR036635">
    <property type="entry name" value="MurB_C_sf"/>
</dbReference>
<dbReference type="InterPro" id="IPR006094">
    <property type="entry name" value="Oxid_FAD_bind_N"/>
</dbReference>
<dbReference type="NCBIfam" id="TIGR00179">
    <property type="entry name" value="murB"/>
    <property type="match status" value="1"/>
</dbReference>
<dbReference type="NCBIfam" id="NF010480">
    <property type="entry name" value="PRK13905.1"/>
    <property type="match status" value="1"/>
</dbReference>
<dbReference type="PANTHER" id="PTHR21071">
    <property type="entry name" value="UDP-N-ACETYLENOLPYRUVOYLGLUCOSAMINE REDUCTASE"/>
    <property type="match status" value="1"/>
</dbReference>
<dbReference type="PANTHER" id="PTHR21071:SF4">
    <property type="entry name" value="UDP-N-ACETYLENOLPYRUVOYLGLUCOSAMINE REDUCTASE"/>
    <property type="match status" value="1"/>
</dbReference>
<dbReference type="Pfam" id="PF01565">
    <property type="entry name" value="FAD_binding_4"/>
    <property type="match status" value="1"/>
</dbReference>
<dbReference type="Pfam" id="PF02873">
    <property type="entry name" value="MurB_C"/>
    <property type="match status" value="1"/>
</dbReference>
<dbReference type="SUPFAM" id="SSF56176">
    <property type="entry name" value="FAD-binding/transporter-associated domain-like"/>
    <property type="match status" value="1"/>
</dbReference>
<dbReference type="SUPFAM" id="SSF56194">
    <property type="entry name" value="Uridine diphospho-N-Acetylenolpyruvylglucosamine reductase, MurB, C-terminal domain"/>
    <property type="match status" value="1"/>
</dbReference>
<dbReference type="PROSITE" id="PS51387">
    <property type="entry name" value="FAD_PCMH"/>
    <property type="match status" value="1"/>
</dbReference>
<evidence type="ECO:0000255" key="1">
    <source>
        <dbReference type="HAMAP-Rule" id="MF_00037"/>
    </source>
</evidence>
<feature type="chain" id="PRO_0000179225" description="UDP-N-acetylenolpyruvoylglucosamine reductase">
    <location>
        <begin position="1"/>
        <end position="298"/>
    </location>
</feature>
<feature type="domain" description="FAD-binding PCMH-type" evidence="1">
    <location>
        <begin position="27"/>
        <end position="191"/>
    </location>
</feature>
<feature type="active site" evidence="1">
    <location>
        <position position="170"/>
    </location>
</feature>
<feature type="active site" description="Proton donor" evidence="1">
    <location>
        <position position="220"/>
    </location>
</feature>
<feature type="active site" evidence="1">
    <location>
        <position position="290"/>
    </location>
</feature>
<name>MURB_LISIN</name>
<gene>
    <name evidence="1" type="primary">murB</name>
    <name type="ordered locus">lin1459</name>
</gene>
<proteinExistence type="inferred from homology"/>
<accession>Q92BT5</accession>
<comment type="function">
    <text evidence="1">Cell wall formation.</text>
</comment>
<comment type="catalytic activity">
    <reaction evidence="1">
        <text>UDP-N-acetyl-alpha-D-muramate + NADP(+) = UDP-N-acetyl-3-O-(1-carboxyvinyl)-alpha-D-glucosamine + NADPH + H(+)</text>
        <dbReference type="Rhea" id="RHEA:12248"/>
        <dbReference type="ChEBI" id="CHEBI:15378"/>
        <dbReference type="ChEBI" id="CHEBI:57783"/>
        <dbReference type="ChEBI" id="CHEBI:58349"/>
        <dbReference type="ChEBI" id="CHEBI:68483"/>
        <dbReference type="ChEBI" id="CHEBI:70757"/>
        <dbReference type="EC" id="1.3.1.98"/>
    </reaction>
</comment>
<comment type="cofactor">
    <cofactor evidence="1">
        <name>FAD</name>
        <dbReference type="ChEBI" id="CHEBI:57692"/>
    </cofactor>
</comment>
<comment type="pathway">
    <text evidence="1">Cell wall biogenesis; peptidoglycan biosynthesis.</text>
</comment>
<comment type="subcellular location">
    <subcellularLocation>
        <location evidence="1">Cytoplasm</location>
    </subcellularLocation>
</comment>
<comment type="similarity">
    <text evidence="1">Belongs to the MurB family.</text>
</comment>
<sequence>MNNLQAQFPHIAIKLNEPLSKYTYTKTGGNADVFVMPKTIEETKEIVTYCHQNKLPLTILGNGSNLIIKDGGIRGVIVHLDLLQSIERKNTQIIAMSGAKLIDTAKFALDESLSGLEFACGIPGSIGGALHMNAGAYGGEISDVLEAATVLTQSGELKKLKRSELKAAYRFSTIAEKKYIVLDATFSLELEDKNIIQAKMDELTALREAKQPLEYPSCGSVFKRPPGHFAGKLIQDSGLQGHIIGGAQVSLKHAGFIVNIGGATATDYMNLIAHVQQTVREKFDVELETEVKIIGEDK</sequence>
<keyword id="KW-0131">Cell cycle</keyword>
<keyword id="KW-0132">Cell division</keyword>
<keyword id="KW-0133">Cell shape</keyword>
<keyword id="KW-0961">Cell wall biogenesis/degradation</keyword>
<keyword id="KW-0963">Cytoplasm</keyword>
<keyword id="KW-0274">FAD</keyword>
<keyword id="KW-0285">Flavoprotein</keyword>
<keyword id="KW-0521">NADP</keyword>
<keyword id="KW-0560">Oxidoreductase</keyword>
<keyword id="KW-0573">Peptidoglycan synthesis</keyword>